<evidence type="ECO:0000255" key="1">
    <source>
        <dbReference type="HAMAP-Rule" id="MF_01010"/>
    </source>
</evidence>
<organism>
    <name type="scientific">Acinetobacter baumannii (strain SDF)</name>
    <dbReference type="NCBI Taxonomy" id="509170"/>
    <lineage>
        <taxon>Bacteria</taxon>
        <taxon>Pseudomonadati</taxon>
        <taxon>Pseudomonadota</taxon>
        <taxon>Gammaproteobacteria</taxon>
        <taxon>Moraxellales</taxon>
        <taxon>Moraxellaceae</taxon>
        <taxon>Acinetobacter</taxon>
        <taxon>Acinetobacter calcoaceticus/baumannii complex</taxon>
    </lineage>
</organism>
<name>RLMD_ACIBS</name>
<sequence>MKQQAKSRKPQQPEYIFQVETLSHEGRGIAHYGSHPDHPADKHGKKVFIRYALPGETVKAQITHEAKRLEEAEMVALLAEPSANRVEAVCPHYGICGGCSMQHIHPDEQIRLKQNVLQSHLQHFAGIQPEQWLEPIRSLQSDYRRRARIGVRYLPKQDRLILGFREHHSNRLTSIHTCSVLDKKLSDSLPELRNLLQSLKGKVHIGHVELAKGDHETSLLVRHIEKLNNADVNQLRQFALHKGWQLYLQPKGPESLRRIDEEQGAMRLHYALNAFDVNFAFSPLDFTQVNATVNEQMVQLACELLQLQQGERVLDLFCGLGNFSLPLARCVGAKGVIVGVEASEEMVQRATDNVKRNNLVQASFFSQDLTKDFSHHSWANQGFDALLIDPPRAGAYEIIQYVPNFGAKRIVYVSCNPATLARDAGVLVQHGYQLKKAAVMDMFTHTEHVESIALFEKIQEIND</sequence>
<dbReference type="EC" id="2.1.1.190" evidence="1"/>
<dbReference type="EMBL" id="CU468230">
    <property type="protein sequence ID" value="CAP02232.1"/>
    <property type="molecule type" value="Genomic_DNA"/>
</dbReference>
<dbReference type="SMR" id="B0VKL3"/>
<dbReference type="KEGG" id="abm:ABSDF2942"/>
<dbReference type="HOGENOM" id="CLU_014689_8_2_6"/>
<dbReference type="Proteomes" id="UP000001741">
    <property type="component" value="Chromosome"/>
</dbReference>
<dbReference type="GO" id="GO:0051539">
    <property type="term" value="F:4 iron, 4 sulfur cluster binding"/>
    <property type="evidence" value="ECO:0007669"/>
    <property type="project" value="UniProtKB-KW"/>
</dbReference>
<dbReference type="GO" id="GO:0005506">
    <property type="term" value="F:iron ion binding"/>
    <property type="evidence" value="ECO:0007669"/>
    <property type="project" value="UniProtKB-UniRule"/>
</dbReference>
<dbReference type="GO" id="GO:0003723">
    <property type="term" value="F:RNA binding"/>
    <property type="evidence" value="ECO:0007669"/>
    <property type="project" value="InterPro"/>
</dbReference>
<dbReference type="GO" id="GO:0070041">
    <property type="term" value="F:rRNA (uridine-C5-)-methyltransferase activity"/>
    <property type="evidence" value="ECO:0007669"/>
    <property type="project" value="UniProtKB-UniRule"/>
</dbReference>
<dbReference type="GO" id="GO:0070475">
    <property type="term" value="P:rRNA base methylation"/>
    <property type="evidence" value="ECO:0007669"/>
    <property type="project" value="TreeGrafter"/>
</dbReference>
<dbReference type="CDD" id="cd02440">
    <property type="entry name" value="AdoMet_MTases"/>
    <property type="match status" value="1"/>
</dbReference>
<dbReference type="FunFam" id="3.40.50.150:FF:000009">
    <property type="entry name" value="23S rRNA (Uracil(1939)-C(5))-methyltransferase RlmD"/>
    <property type="match status" value="1"/>
</dbReference>
<dbReference type="Gene3D" id="2.40.50.1070">
    <property type="match status" value="1"/>
</dbReference>
<dbReference type="Gene3D" id="2.40.50.140">
    <property type="entry name" value="Nucleic acid-binding proteins"/>
    <property type="match status" value="1"/>
</dbReference>
<dbReference type="Gene3D" id="3.40.50.150">
    <property type="entry name" value="Vaccinia Virus protein VP39"/>
    <property type="match status" value="1"/>
</dbReference>
<dbReference type="HAMAP" id="MF_01010">
    <property type="entry name" value="23SrRNA_methyltr_RlmD"/>
    <property type="match status" value="1"/>
</dbReference>
<dbReference type="InterPro" id="IPR001566">
    <property type="entry name" value="23S_rRNA_MeTrfase_RlmD"/>
</dbReference>
<dbReference type="InterPro" id="IPR030390">
    <property type="entry name" value="MeTrfase_TrmA_AS"/>
</dbReference>
<dbReference type="InterPro" id="IPR012340">
    <property type="entry name" value="NA-bd_OB-fold"/>
</dbReference>
<dbReference type="InterPro" id="IPR029063">
    <property type="entry name" value="SAM-dependent_MTases_sf"/>
</dbReference>
<dbReference type="InterPro" id="IPR002792">
    <property type="entry name" value="TRAM_dom"/>
</dbReference>
<dbReference type="InterPro" id="IPR010280">
    <property type="entry name" value="U5_MeTrfase_fam"/>
</dbReference>
<dbReference type="NCBIfam" id="NF009639">
    <property type="entry name" value="PRK13168.1"/>
    <property type="match status" value="1"/>
</dbReference>
<dbReference type="NCBIfam" id="TIGR00479">
    <property type="entry name" value="rumA"/>
    <property type="match status" value="1"/>
</dbReference>
<dbReference type="PANTHER" id="PTHR11061:SF49">
    <property type="entry name" value="23S RRNA (URACIL(1939)-C(5))-METHYLTRANSFERASE RLMD"/>
    <property type="match status" value="1"/>
</dbReference>
<dbReference type="PANTHER" id="PTHR11061">
    <property type="entry name" value="RNA M5U METHYLTRANSFERASE"/>
    <property type="match status" value="1"/>
</dbReference>
<dbReference type="Pfam" id="PF01938">
    <property type="entry name" value="TRAM"/>
    <property type="match status" value="1"/>
</dbReference>
<dbReference type="Pfam" id="PF05958">
    <property type="entry name" value="tRNA_U5-meth_tr"/>
    <property type="match status" value="1"/>
</dbReference>
<dbReference type="SUPFAM" id="SSF50249">
    <property type="entry name" value="Nucleic acid-binding proteins"/>
    <property type="match status" value="1"/>
</dbReference>
<dbReference type="SUPFAM" id="SSF53335">
    <property type="entry name" value="S-adenosyl-L-methionine-dependent methyltransferases"/>
    <property type="match status" value="1"/>
</dbReference>
<dbReference type="PROSITE" id="PS51687">
    <property type="entry name" value="SAM_MT_RNA_M5U"/>
    <property type="match status" value="1"/>
</dbReference>
<dbReference type="PROSITE" id="PS50926">
    <property type="entry name" value="TRAM"/>
    <property type="match status" value="1"/>
</dbReference>
<dbReference type="PROSITE" id="PS01230">
    <property type="entry name" value="TRMA_1"/>
    <property type="match status" value="1"/>
</dbReference>
<protein>
    <recommendedName>
        <fullName evidence="1">23S rRNA (uracil(1939)-C(5))-methyltransferase RlmD</fullName>
        <ecNumber evidence="1">2.1.1.190</ecNumber>
    </recommendedName>
    <alternativeName>
        <fullName evidence="1">23S rRNA(m5U1939)-methyltransferase</fullName>
    </alternativeName>
</protein>
<feature type="chain" id="PRO_1000200838" description="23S rRNA (uracil(1939)-C(5))-methyltransferase RlmD">
    <location>
        <begin position="1"/>
        <end position="463"/>
    </location>
</feature>
<feature type="domain" description="TRAM" evidence="1">
    <location>
        <begin position="6"/>
        <end position="76"/>
    </location>
</feature>
<feature type="active site" description="Nucleophile" evidence="1">
    <location>
        <position position="415"/>
    </location>
</feature>
<feature type="binding site" evidence="1">
    <location>
        <position position="90"/>
    </location>
    <ligand>
        <name>[4Fe-4S] cluster</name>
        <dbReference type="ChEBI" id="CHEBI:49883"/>
    </ligand>
</feature>
<feature type="binding site" evidence="1">
    <location>
        <position position="96"/>
    </location>
    <ligand>
        <name>[4Fe-4S] cluster</name>
        <dbReference type="ChEBI" id="CHEBI:49883"/>
    </ligand>
</feature>
<feature type="binding site" evidence="1">
    <location>
        <position position="99"/>
    </location>
    <ligand>
        <name>[4Fe-4S] cluster</name>
        <dbReference type="ChEBI" id="CHEBI:49883"/>
    </ligand>
</feature>
<feature type="binding site" evidence="1">
    <location>
        <position position="178"/>
    </location>
    <ligand>
        <name>[4Fe-4S] cluster</name>
        <dbReference type="ChEBI" id="CHEBI:49883"/>
    </ligand>
</feature>
<feature type="binding site" evidence="1">
    <location>
        <position position="288"/>
    </location>
    <ligand>
        <name>S-adenosyl-L-methionine</name>
        <dbReference type="ChEBI" id="CHEBI:59789"/>
    </ligand>
</feature>
<feature type="binding site" evidence="1">
    <location>
        <position position="317"/>
    </location>
    <ligand>
        <name>S-adenosyl-L-methionine</name>
        <dbReference type="ChEBI" id="CHEBI:59789"/>
    </ligand>
</feature>
<feature type="binding site" evidence="1">
    <location>
        <position position="322"/>
    </location>
    <ligand>
        <name>S-adenosyl-L-methionine</name>
        <dbReference type="ChEBI" id="CHEBI:59789"/>
    </ligand>
</feature>
<feature type="binding site" evidence="1">
    <location>
        <position position="341"/>
    </location>
    <ligand>
        <name>S-adenosyl-L-methionine</name>
        <dbReference type="ChEBI" id="CHEBI:59789"/>
    </ligand>
</feature>
<feature type="binding site" evidence="1">
    <location>
        <position position="368"/>
    </location>
    <ligand>
        <name>S-adenosyl-L-methionine</name>
        <dbReference type="ChEBI" id="CHEBI:59789"/>
    </ligand>
</feature>
<feature type="binding site" evidence="1">
    <location>
        <position position="389"/>
    </location>
    <ligand>
        <name>S-adenosyl-L-methionine</name>
        <dbReference type="ChEBI" id="CHEBI:59789"/>
    </ligand>
</feature>
<proteinExistence type="inferred from homology"/>
<accession>B0VKL3</accession>
<reference key="1">
    <citation type="journal article" date="2008" name="PLoS ONE">
        <title>Comparative analysis of Acinetobacters: three genomes for three lifestyles.</title>
        <authorList>
            <person name="Vallenet D."/>
            <person name="Nordmann P."/>
            <person name="Barbe V."/>
            <person name="Poirel L."/>
            <person name="Mangenot S."/>
            <person name="Bataille E."/>
            <person name="Dossat C."/>
            <person name="Gas S."/>
            <person name="Kreimeyer A."/>
            <person name="Lenoble P."/>
            <person name="Oztas S."/>
            <person name="Poulain J."/>
            <person name="Segurens B."/>
            <person name="Robert C."/>
            <person name="Abergel C."/>
            <person name="Claverie J.-M."/>
            <person name="Raoult D."/>
            <person name="Medigue C."/>
            <person name="Weissenbach J."/>
            <person name="Cruveiller S."/>
        </authorList>
    </citation>
    <scope>NUCLEOTIDE SEQUENCE [LARGE SCALE GENOMIC DNA]</scope>
    <source>
        <strain>SDF</strain>
    </source>
</reference>
<comment type="function">
    <text evidence="1">Catalyzes the formation of 5-methyl-uridine at position 1939 (m5U1939) in 23S rRNA.</text>
</comment>
<comment type="catalytic activity">
    <reaction evidence="1">
        <text>uridine(1939) in 23S rRNA + S-adenosyl-L-methionine = 5-methyluridine(1939) in 23S rRNA + S-adenosyl-L-homocysteine + H(+)</text>
        <dbReference type="Rhea" id="RHEA:42908"/>
        <dbReference type="Rhea" id="RHEA-COMP:10278"/>
        <dbReference type="Rhea" id="RHEA-COMP:10279"/>
        <dbReference type="ChEBI" id="CHEBI:15378"/>
        <dbReference type="ChEBI" id="CHEBI:57856"/>
        <dbReference type="ChEBI" id="CHEBI:59789"/>
        <dbReference type="ChEBI" id="CHEBI:65315"/>
        <dbReference type="ChEBI" id="CHEBI:74447"/>
        <dbReference type="EC" id="2.1.1.190"/>
    </reaction>
</comment>
<comment type="similarity">
    <text evidence="1">Belongs to the class I-like SAM-binding methyltransferase superfamily. RNA M5U methyltransferase family. RlmD subfamily.</text>
</comment>
<keyword id="KW-0004">4Fe-4S</keyword>
<keyword id="KW-0408">Iron</keyword>
<keyword id="KW-0411">Iron-sulfur</keyword>
<keyword id="KW-0479">Metal-binding</keyword>
<keyword id="KW-0489">Methyltransferase</keyword>
<keyword id="KW-0698">rRNA processing</keyword>
<keyword id="KW-0949">S-adenosyl-L-methionine</keyword>
<keyword id="KW-0808">Transferase</keyword>
<gene>
    <name evidence="1" type="primary">rlmD</name>
    <name type="synonym">rumA</name>
    <name type="ordered locus">ABSDF2942</name>
</gene>